<organism>
    <name type="scientific">Pongo abelii</name>
    <name type="common">Sumatran orangutan</name>
    <name type="synonym">Pongo pygmaeus abelii</name>
    <dbReference type="NCBI Taxonomy" id="9601"/>
    <lineage>
        <taxon>Eukaryota</taxon>
        <taxon>Metazoa</taxon>
        <taxon>Chordata</taxon>
        <taxon>Craniata</taxon>
        <taxon>Vertebrata</taxon>
        <taxon>Euteleostomi</taxon>
        <taxon>Mammalia</taxon>
        <taxon>Eutheria</taxon>
        <taxon>Euarchontoglires</taxon>
        <taxon>Primates</taxon>
        <taxon>Haplorrhini</taxon>
        <taxon>Catarrhini</taxon>
        <taxon>Hominidae</taxon>
        <taxon>Pongo</taxon>
    </lineage>
</organism>
<protein>
    <recommendedName>
        <fullName>Tripartite motif-containing protein 44</fullName>
    </recommendedName>
</protein>
<proteinExistence type="evidence at transcript level"/>
<evidence type="ECO:0000250" key="1">
    <source>
        <dbReference type="UniProtKB" id="Q96DX7"/>
    </source>
</evidence>
<evidence type="ECO:0000250" key="2">
    <source>
        <dbReference type="UniProtKB" id="Q9QXA7"/>
    </source>
</evidence>
<evidence type="ECO:0000255" key="3"/>
<evidence type="ECO:0000255" key="4">
    <source>
        <dbReference type="PROSITE-ProRule" id="PRU00024"/>
    </source>
</evidence>
<evidence type="ECO:0000256" key="5">
    <source>
        <dbReference type="SAM" id="MobiDB-lite"/>
    </source>
</evidence>
<gene>
    <name type="primary">TRIM44</name>
</gene>
<feature type="chain" id="PRO_0000324098" description="Tripartite motif-containing protein 44">
    <location>
        <begin position="1"/>
        <end position="344"/>
    </location>
</feature>
<feature type="zinc finger region" description="B box-type" evidence="4">
    <location>
        <begin position="174"/>
        <end position="215"/>
    </location>
</feature>
<feature type="region of interest" description="Disordered" evidence="5">
    <location>
        <begin position="1"/>
        <end position="25"/>
    </location>
</feature>
<feature type="region of interest" description="Disordered" evidence="5">
    <location>
        <begin position="68"/>
        <end position="165"/>
    </location>
</feature>
<feature type="region of interest" description="Disordered" evidence="5">
    <location>
        <begin position="309"/>
        <end position="344"/>
    </location>
</feature>
<feature type="coiled-coil region" evidence="3">
    <location>
        <begin position="290"/>
        <end position="325"/>
    </location>
</feature>
<feature type="compositionally biased region" description="Basic and acidic residues" evidence="5">
    <location>
        <begin position="75"/>
        <end position="92"/>
    </location>
</feature>
<feature type="compositionally biased region" description="Acidic residues" evidence="5">
    <location>
        <begin position="93"/>
        <end position="165"/>
    </location>
</feature>
<feature type="compositionally biased region" description="Acidic residues" evidence="5">
    <location>
        <begin position="330"/>
        <end position="344"/>
    </location>
</feature>
<feature type="binding site" evidence="4">
    <location>
        <position position="179"/>
    </location>
    <ligand>
        <name>Zn(2+)</name>
        <dbReference type="ChEBI" id="CHEBI:29105"/>
    </ligand>
</feature>
<feature type="binding site" evidence="4">
    <location>
        <position position="182"/>
    </location>
    <ligand>
        <name>Zn(2+)</name>
        <dbReference type="ChEBI" id="CHEBI:29105"/>
    </ligand>
</feature>
<feature type="binding site" evidence="4">
    <location>
        <position position="201"/>
    </location>
    <ligand>
        <name>Zn(2+)</name>
        <dbReference type="ChEBI" id="CHEBI:29105"/>
    </ligand>
</feature>
<feature type="binding site" evidence="4">
    <location>
        <position position="207"/>
    </location>
    <ligand>
        <name>Zn(2+)</name>
        <dbReference type="ChEBI" id="CHEBI:29105"/>
    </ligand>
</feature>
<feature type="modified residue" description="Phosphoserine" evidence="2">
    <location>
        <position position="336"/>
    </location>
</feature>
<feature type="modified residue" description="Phosphoserine" evidence="2">
    <location>
        <position position="339"/>
    </location>
</feature>
<name>TRI44_PONAB</name>
<reference key="1">
    <citation type="submission" date="2004-11" db="EMBL/GenBank/DDBJ databases">
        <authorList>
            <consortium name="The German cDNA consortium"/>
        </authorList>
    </citation>
    <scope>NUCLEOTIDE SEQUENCE [LARGE SCALE MRNA]</scope>
    <source>
        <tissue>Kidney</tissue>
    </source>
</reference>
<dbReference type="EMBL" id="CR859908">
    <property type="protein sequence ID" value="CAH92064.1"/>
    <property type="molecule type" value="mRNA"/>
</dbReference>
<dbReference type="RefSeq" id="NP_001126201.1">
    <property type="nucleotide sequence ID" value="NM_001132729.2"/>
</dbReference>
<dbReference type="SMR" id="Q5R846"/>
<dbReference type="FunCoup" id="Q5R846">
    <property type="interactions" value="1176"/>
</dbReference>
<dbReference type="STRING" id="9601.ENSPPYP00000003851"/>
<dbReference type="Ensembl" id="ENSPPYT00000056148.1">
    <property type="protein sequence ID" value="ENSPPYP00000034514.1"/>
    <property type="gene ID" value="ENSPPYG00000003355.2"/>
</dbReference>
<dbReference type="GeneID" id="100173169"/>
<dbReference type="KEGG" id="pon:100173169"/>
<dbReference type="CTD" id="54765"/>
<dbReference type="eggNOG" id="ENOG502RHR7">
    <property type="taxonomic scope" value="Eukaryota"/>
</dbReference>
<dbReference type="GeneTree" id="ENSGT00440000034605"/>
<dbReference type="HOGENOM" id="CLU_070347_0_0_1"/>
<dbReference type="InParanoid" id="Q5R846"/>
<dbReference type="OMA" id="LREAYMW"/>
<dbReference type="OrthoDB" id="9049620at2759"/>
<dbReference type="TreeFam" id="TF333911"/>
<dbReference type="Proteomes" id="UP000001595">
    <property type="component" value="Chromosome 11"/>
</dbReference>
<dbReference type="GO" id="GO:0008270">
    <property type="term" value="F:zinc ion binding"/>
    <property type="evidence" value="ECO:0007669"/>
    <property type="project" value="UniProtKB-KW"/>
</dbReference>
<dbReference type="GO" id="GO:0061944">
    <property type="term" value="P:negative regulation of protein K48-linked ubiquitination"/>
    <property type="evidence" value="ECO:0007669"/>
    <property type="project" value="Ensembl"/>
</dbReference>
<dbReference type="GO" id="GO:0001961">
    <property type="term" value="P:positive regulation of cytokine-mediated signaling pathway"/>
    <property type="evidence" value="ECO:0007669"/>
    <property type="project" value="Ensembl"/>
</dbReference>
<dbReference type="GO" id="GO:0002230">
    <property type="term" value="P:positive regulation of defense response to virus by host"/>
    <property type="evidence" value="ECO:0007669"/>
    <property type="project" value="Ensembl"/>
</dbReference>
<dbReference type="GO" id="GO:0045893">
    <property type="term" value="P:positive regulation of DNA-templated transcription"/>
    <property type="evidence" value="ECO:0007669"/>
    <property type="project" value="Ensembl"/>
</dbReference>
<dbReference type="GO" id="GO:1901224">
    <property type="term" value="P:positive regulation of non-canonical NF-kappaB signal transduction"/>
    <property type="evidence" value="ECO:0007669"/>
    <property type="project" value="Ensembl"/>
</dbReference>
<dbReference type="GO" id="GO:0050821">
    <property type="term" value="P:protein stabilization"/>
    <property type="evidence" value="ECO:0007669"/>
    <property type="project" value="Ensembl"/>
</dbReference>
<dbReference type="CDD" id="cd19841">
    <property type="entry name" value="Bbox1_TRIM44"/>
    <property type="match status" value="1"/>
</dbReference>
<dbReference type="CDD" id="cd19784">
    <property type="entry name" value="Bbox2_TRIM44"/>
    <property type="match status" value="1"/>
</dbReference>
<dbReference type="Gene3D" id="4.10.830.40">
    <property type="match status" value="1"/>
</dbReference>
<dbReference type="Gene3D" id="3.30.160.60">
    <property type="entry name" value="Classic Zinc Finger"/>
    <property type="match status" value="1"/>
</dbReference>
<dbReference type="InterPro" id="IPR050143">
    <property type="entry name" value="TRIM/RBCC"/>
</dbReference>
<dbReference type="InterPro" id="IPR000315">
    <property type="entry name" value="Znf_B-box"/>
</dbReference>
<dbReference type="PANTHER" id="PTHR24103">
    <property type="entry name" value="E3 UBIQUITIN-PROTEIN LIGASE TRIM"/>
    <property type="match status" value="1"/>
</dbReference>
<dbReference type="Pfam" id="PF00643">
    <property type="entry name" value="zf-B_box"/>
    <property type="match status" value="1"/>
</dbReference>
<dbReference type="SMART" id="SM00336">
    <property type="entry name" value="BBOX"/>
    <property type="match status" value="1"/>
</dbReference>
<dbReference type="SUPFAM" id="SSF57845">
    <property type="entry name" value="B-box zinc-binding domain"/>
    <property type="match status" value="1"/>
</dbReference>
<dbReference type="PROSITE" id="PS50119">
    <property type="entry name" value="ZF_BBOX"/>
    <property type="match status" value="1"/>
</dbReference>
<comment type="function">
    <text evidence="1">May play a role in the process of differentiation and maturation of neuronal cells (By similarity). May regulate the activity of TRIM17 (By similarity). Is a negative regulator of PAX6 expression (By similarity).</text>
</comment>
<comment type="subunit">
    <text evidence="1">Interacts (via coiled coil) with TRIM17 (via coiled coil).</text>
</comment>
<sequence length="344" mass="38456">MASGVGAAFEELPHDGTCDECEPDEAPGAEEVCRECGFCYCRRHAEAHRQKFLSHHLAEYVHGAQAWTPPADGEGAGKEEAEVKVEQEREIESEAGEESESEEESESEEESETEEESEDESDEESEEDSEEEMEDEQESEAEEDNQEEGESEAEGETEAESEFDPEIEMEAERVAKRKCPDHGLDLSTYCQEDRQLICVLCPVIGAHQGHQLSTLDEAFEELRSKDSGGLKAAMIELVERLKFKSSDPKVTRDQMKMFIQQEFKKVQKVIADEEQKALHLVDIQEAMATAHVTEILADIQSHMDRLMTQMAQAKEQLDTSNESAEPKAEGDEEGPSGASEEEDT</sequence>
<keyword id="KW-0175">Coiled coil</keyword>
<keyword id="KW-0479">Metal-binding</keyword>
<keyword id="KW-0597">Phosphoprotein</keyword>
<keyword id="KW-1185">Reference proteome</keyword>
<keyword id="KW-0862">Zinc</keyword>
<keyword id="KW-0863">Zinc-finger</keyword>
<accession>Q5R846</accession>